<sequence length="324" mass="34702">MSPPAAVSPPARSAELASAPAVKLPVGLSKNSAAATTVEEMEGKWDDFKFAPIRESQVSRAMTRRYFQDLDNYAESDIVIVGAGSCGLSTRYILGKKRPDLKIAIIEASVSPGGGAWLGGQLFSAMVMRKPADAFLREVGVPYEDEGNYVVVKHAALFTSTIMSKVLQLPNCKLFNATCVEDLITRPSKEGVRISGVVTNWTLVSMHHDDQSCMDPNTINAPLVISTTGHDAPMGAFCVKRLVSMGRIEKLGGMRGLDMNVAEDAIVKGTREIVPGLIVGGMELSEVDGANRMGPTFGAMVLSGLKAAEEALKVIDIRQKQNSF</sequence>
<name>THI4_FUSSH</name>
<feature type="chain" id="PRO_0000034055" description="Thiamine thiazole synthase">
    <location>
        <begin position="1"/>
        <end position="324"/>
    </location>
</feature>
<feature type="binding site" evidence="1">
    <location>
        <position position="86"/>
    </location>
    <ligand>
        <name>substrate</name>
    </ligand>
</feature>
<feature type="binding site" evidence="1">
    <location>
        <begin position="107"/>
        <end position="108"/>
    </location>
    <ligand>
        <name>substrate</name>
    </ligand>
</feature>
<feature type="binding site" evidence="1">
    <location>
        <position position="115"/>
    </location>
    <ligand>
        <name>substrate</name>
    </ligand>
</feature>
<feature type="binding site" evidence="1">
    <location>
        <position position="180"/>
    </location>
    <ligand>
        <name>substrate</name>
    </ligand>
</feature>
<feature type="binding site" evidence="1">
    <location>
        <position position="215"/>
    </location>
    <ligand>
        <name>substrate</name>
    </ligand>
</feature>
<feature type="binding site" evidence="1">
    <location>
        <position position="230"/>
    </location>
    <ligand>
        <name>substrate</name>
    </ligand>
</feature>
<feature type="binding site" evidence="1">
    <location>
        <position position="282"/>
    </location>
    <ligand>
        <name>substrate</name>
    </ligand>
</feature>
<feature type="binding site" evidence="1">
    <location>
        <begin position="292"/>
        <end position="294"/>
    </location>
    <ligand>
        <name>substrate</name>
    </ligand>
</feature>
<feature type="modified residue" description="2,3-didehydroalanine (Cys)" evidence="1">
    <location>
        <position position="213"/>
    </location>
</feature>
<accession>P23617</accession>
<reference key="1">
    <citation type="journal article" date="1990" name="J. Bacteriol.">
        <title>sti35, a stress-responsive gene in Fusarium spp.</title>
        <authorList>
            <person name="Choi G.H."/>
            <person name="Marek E.T."/>
            <person name="Schardl C.L."/>
            <person name="Richey M.G."/>
            <person name="Chang S."/>
            <person name="Smith D.A."/>
        </authorList>
    </citation>
    <scope>NUCLEOTIDE SEQUENCE [GENOMIC DNA]</scope>
    <source>
        <strain>ATCC 60860 / FB</strain>
    </source>
</reference>
<comment type="function">
    <text evidence="1">Involved in biosynthesis of the thiamine precursor thiazole. Catalyzes the conversion of NAD and glycine to adenosine diphosphate 5-(2-hydroxyethyl)-4-methylthiazole-2-carboxylic acid (ADT), an adenylated thiazole intermediate. The reaction includes an iron-dependent sulfide transfer from a conserved cysteine residue of the protein to a thiazole intermediate. The enzyme can only undergo a single turnover, which suggests it is a suicide enzyme. May have additional roles in adaptation to various stress conditions and in DNA damage tolerance.</text>
</comment>
<comment type="catalytic activity">
    <reaction evidence="1">
        <text>[ADP-thiazole synthase]-L-cysteine + glycine + NAD(+) = [ADP-thiazole synthase]-dehydroalanine + ADP-5-ethyl-4-methylthiazole-2-carboxylate + nicotinamide + 3 H2O + 2 H(+)</text>
        <dbReference type="Rhea" id="RHEA:55708"/>
        <dbReference type="Rhea" id="RHEA-COMP:14264"/>
        <dbReference type="Rhea" id="RHEA-COMP:14265"/>
        <dbReference type="ChEBI" id="CHEBI:15377"/>
        <dbReference type="ChEBI" id="CHEBI:15378"/>
        <dbReference type="ChEBI" id="CHEBI:17154"/>
        <dbReference type="ChEBI" id="CHEBI:29950"/>
        <dbReference type="ChEBI" id="CHEBI:57305"/>
        <dbReference type="ChEBI" id="CHEBI:57540"/>
        <dbReference type="ChEBI" id="CHEBI:90873"/>
        <dbReference type="ChEBI" id="CHEBI:139151"/>
        <dbReference type="EC" id="2.4.2.60"/>
    </reaction>
</comment>
<comment type="cofactor">
    <cofactor evidence="1">
        <name>Fe cation</name>
        <dbReference type="ChEBI" id="CHEBI:24875"/>
    </cofactor>
    <text evidence="1">Binds 1 Fe cation per subunit.</text>
</comment>
<comment type="subunit">
    <text evidence="1">Homooctamer.</text>
</comment>
<comment type="subcellular location">
    <subcellularLocation>
        <location evidence="1">Cytoplasm</location>
    </subcellularLocation>
    <subcellularLocation>
        <location evidence="1">Nucleus</location>
    </subcellularLocation>
</comment>
<comment type="induction">
    <text>By ethanol, Cu(2+) chloride, and by phaseollinisoflavan (an antifungal isoflavonoid).</text>
</comment>
<comment type="PTM">
    <text evidence="1">During the catalytic reaction, a sulfide is transferred from Cys-213 to a reaction intermediate, generating a dehydroalanine residue.</text>
</comment>
<comment type="similarity">
    <text evidence="1">Belongs to the THI4 family.</text>
</comment>
<keyword id="KW-0963">Cytoplasm</keyword>
<keyword id="KW-0408">Iron</keyword>
<keyword id="KW-0479">Metal-binding</keyword>
<keyword id="KW-0520">NAD</keyword>
<keyword id="KW-0539">Nucleus</keyword>
<keyword id="KW-0346">Stress response</keyword>
<keyword id="KW-0784">Thiamine biosynthesis</keyword>
<keyword id="KW-0808">Transferase</keyword>
<proteinExistence type="evidence at transcript level"/>
<gene>
    <name type="primary">sti35</name>
</gene>
<dbReference type="EC" id="2.4.2.60" evidence="1"/>
<dbReference type="EMBL" id="M33642">
    <property type="protein sequence ID" value="AAA33340.1"/>
    <property type="molecule type" value="Genomic_DNA"/>
</dbReference>
<dbReference type="PIR" id="A37767">
    <property type="entry name" value="A37767"/>
</dbReference>
<dbReference type="SMR" id="P23617"/>
<dbReference type="GO" id="GO:0005829">
    <property type="term" value="C:cytosol"/>
    <property type="evidence" value="ECO:0007669"/>
    <property type="project" value="UniProtKB-UniRule"/>
</dbReference>
<dbReference type="GO" id="GO:0005634">
    <property type="term" value="C:nucleus"/>
    <property type="evidence" value="ECO:0007669"/>
    <property type="project" value="UniProtKB-SubCell"/>
</dbReference>
<dbReference type="GO" id="GO:0160205">
    <property type="term" value="F:cysteine-dependent adenosine diphosphate thiazole synthase activity"/>
    <property type="evidence" value="ECO:0007669"/>
    <property type="project" value="UniProtKB-EC"/>
</dbReference>
<dbReference type="GO" id="GO:0005506">
    <property type="term" value="F:iron ion binding"/>
    <property type="evidence" value="ECO:0007669"/>
    <property type="project" value="UniProtKB-UniRule"/>
</dbReference>
<dbReference type="GO" id="GO:0009228">
    <property type="term" value="P:thiamine biosynthetic process"/>
    <property type="evidence" value="ECO:0007669"/>
    <property type="project" value="UniProtKB-UniRule"/>
</dbReference>
<dbReference type="GO" id="GO:0052837">
    <property type="term" value="P:thiazole biosynthetic process"/>
    <property type="evidence" value="ECO:0007669"/>
    <property type="project" value="UniProtKB-UniRule"/>
</dbReference>
<dbReference type="Gene3D" id="6.10.250.2840">
    <property type="match status" value="1"/>
</dbReference>
<dbReference type="Gene3D" id="3.50.50.60">
    <property type="entry name" value="FAD/NAD(P)-binding domain"/>
    <property type="match status" value="1"/>
</dbReference>
<dbReference type="HAMAP" id="MF_03158">
    <property type="entry name" value="THI4"/>
    <property type="match status" value="1"/>
</dbReference>
<dbReference type="InterPro" id="IPR036188">
    <property type="entry name" value="FAD/NAD-bd_sf"/>
</dbReference>
<dbReference type="InterPro" id="IPR027495">
    <property type="entry name" value="Sti35"/>
</dbReference>
<dbReference type="InterPro" id="IPR002922">
    <property type="entry name" value="Thi4_fam"/>
</dbReference>
<dbReference type="NCBIfam" id="TIGR00292">
    <property type="entry name" value="sulfide-dependent adenosine diphosphate thiazole synthase"/>
    <property type="match status" value="1"/>
</dbReference>
<dbReference type="PANTHER" id="PTHR43422">
    <property type="entry name" value="THIAMINE THIAZOLE SYNTHASE"/>
    <property type="match status" value="1"/>
</dbReference>
<dbReference type="PANTHER" id="PTHR43422:SF3">
    <property type="entry name" value="THIAMINE THIAZOLE SYNTHASE"/>
    <property type="match status" value="1"/>
</dbReference>
<dbReference type="Pfam" id="PF01946">
    <property type="entry name" value="Thi4"/>
    <property type="match status" value="1"/>
</dbReference>
<dbReference type="SUPFAM" id="SSF51905">
    <property type="entry name" value="FAD/NAD(P)-binding domain"/>
    <property type="match status" value="1"/>
</dbReference>
<evidence type="ECO:0000255" key="1">
    <source>
        <dbReference type="HAMAP-Rule" id="MF_03158"/>
    </source>
</evidence>
<protein>
    <recommendedName>
        <fullName evidence="1">Thiamine thiazole synthase</fullName>
        <ecNumber evidence="1">2.4.2.60</ecNumber>
    </recommendedName>
    <alternativeName>
        <fullName>Stress-inducible protein sti35</fullName>
    </alternativeName>
    <alternativeName>
        <fullName evidence="1">Thiazole biosynthetic enzyme</fullName>
    </alternativeName>
</protein>
<organism>
    <name type="scientific">Fusarium solani subsp. phaseoli</name>
    <name type="common">Nectria haematococca</name>
    <dbReference type="NCBI Taxonomy" id="120645"/>
    <lineage>
        <taxon>Eukaryota</taxon>
        <taxon>Fungi</taxon>
        <taxon>Dikarya</taxon>
        <taxon>Ascomycota</taxon>
        <taxon>Pezizomycotina</taxon>
        <taxon>Sordariomycetes</taxon>
        <taxon>Hypocreomycetidae</taxon>
        <taxon>Hypocreales</taxon>
        <taxon>Nectriaceae</taxon>
        <taxon>Fusarium</taxon>
        <taxon>Fusarium solani species complex</taxon>
    </lineage>
</organism>